<dbReference type="EC" id="6.3.2.8" evidence="1"/>
<dbReference type="EMBL" id="CP000738">
    <property type="protein sequence ID" value="ABR60914.1"/>
    <property type="molecule type" value="Genomic_DNA"/>
</dbReference>
<dbReference type="RefSeq" id="WP_011976211.1">
    <property type="nucleotide sequence ID" value="NC_009636.1"/>
</dbReference>
<dbReference type="RefSeq" id="YP_001327749.1">
    <property type="nucleotide sequence ID" value="NC_009636.1"/>
</dbReference>
<dbReference type="SMR" id="A6UB84"/>
<dbReference type="STRING" id="366394.Smed_2081"/>
<dbReference type="GeneID" id="61612990"/>
<dbReference type="KEGG" id="smd:Smed_2081"/>
<dbReference type="PATRIC" id="fig|366394.8.peg.5239"/>
<dbReference type="eggNOG" id="COG0773">
    <property type="taxonomic scope" value="Bacteria"/>
</dbReference>
<dbReference type="HOGENOM" id="CLU_028104_2_2_5"/>
<dbReference type="OrthoDB" id="9804126at2"/>
<dbReference type="UniPathway" id="UPA00219"/>
<dbReference type="Proteomes" id="UP000001108">
    <property type="component" value="Chromosome"/>
</dbReference>
<dbReference type="GO" id="GO:0005737">
    <property type="term" value="C:cytoplasm"/>
    <property type="evidence" value="ECO:0007669"/>
    <property type="project" value="UniProtKB-SubCell"/>
</dbReference>
<dbReference type="GO" id="GO:0005524">
    <property type="term" value="F:ATP binding"/>
    <property type="evidence" value="ECO:0007669"/>
    <property type="project" value="UniProtKB-UniRule"/>
</dbReference>
<dbReference type="GO" id="GO:0008763">
    <property type="term" value="F:UDP-N-acetylmuramate-L-alanine ligase activity"/>
    <property type="evidence" value="ECO:0007669"/>
    <property type="project" value="UniProtKB-UniRule"/>
</dbReference>
<dbReference type="GO" id="GO:0051301">
    <property type="term" value="P:cell division"/>
    <property type="evidence" value="ECO:0007669"/>
    <property type="project" value="UniProtKB-KW"/>
</dbReference>
<dbReference type="GO" id="GO:0071555">
    <property type="term" value="P:cell wall organization"/>
    <property type="evidence" value="ECO:0007669"/>
    <property type="project" value="UniProtKB-KW"/>
</dbReference>
<dbReference type="GO" id="GO:0009252">
    <property type="term" value="P:peptidoglycan biosynthetic process"/>
    <property type="evidence" value="ECO:0007669"/>
    <property type="project" value="UniProtKB-UniRule"/>
</dbReference>
<dbReference type="GO" id="GO:0008360">
    <property type="term" value="P:regulation of cell shape"/>
    <property type="evidence" value="ECO:0007669"/>
    <property type="project" value="UniProtKB-KW"/>
</dbReference>
<dbReference type="Gene3D" id="3.90.190.20">
    <property type="entry name" value="Mur ligase, C-terminal domain"/>
    <property type="match status" value="1"/>
</dbReference>
<dbReference type="Gene3D" id="3.40.1190.10">
    <property type="entry name" value="Mur-like, catalytic domain"/>
    <property type="match status" value="1"/>
</dbReference>
<dbReference type="Gene3D" id="3.40.50.720">
    <property type="entry name" value="NAD(P)-binding Rossmann-like Domain"/>
    <property type="match status" value="1"/>
</dbReference>
<dbReference type="HAMAP" id="MF_00046">
    <property type="entry name" value="MurC"/>
    <property type="match status" value="1"/>
</dbReference>
<dbReference type="InterPro" id="IPR036565">
    <property type="entry name" value="Mur-like_cat_sf"/>
</dbReference>
<dbReference type="InterPro" id="IPR004101">
    <property type="entry name" value="Mur_ligase_C"/>
</dbReference>
<dbReference type="InterPro" id="IPR036615">
    <property type="entry name" value="Mur_ligase_C_dom_sf"/>
</dbReference>
<dbReference type="InterPro" id="IPR013221">
    <property type="entry name" value="Mur_ligase_cen"/>
</dbReference>
<dbReference type="InterPro" id="IPR000713">
    <property type="entry name" value="Mur_ligase_N"/>
</dbReference>
<dbReference type="InterPro" id="IPR050061">
    <property type="entry name" value="MurCDEF_pg_biosynth"/>
</dbReference>
<dbReference type="InterPro" id="IPR005758">
    <property type="entry name" value="UDP-N-AcMur_Ala_ligase_MurC"/>
</dbReference>
<dbReference type="NCBIfam" id="TIGR01082">
    <property type="entry name" value="murC"/>
    <property type="match status" value="1"/>
</dbReference>
<dbReference type="PANTHER" id="PTHR43445:SF3">
    <property type="entry name" value="UDP-N-ACETYLMURAMATE--L-ALANINE LIGASE"/>
    <property type="match status" value="1"/>
</dbReference>
<dbReference type="PANTHER" id="PTHR43445">
    <property type="entry name" value="UDP-N-ACETYLMURAMATE--L-ALANINE LIGASE-RELATED"/>
    <property type="match status" value="1"/>
</dbReference>
<dbReference type="Pfam" id="PF01225">
    <property type="entry name" value="Mur_ligase"/>
    <property type="match status" value="1"/>
</dbReference>
<dbReference type="Pfam" id="PF02875">
    <property type="entry name" value="Mur_ligase_C"/>
    <property type="match status" value="1"/>
</dbReference>
<dbReference type="Pfam" id="PF08245">
    <property type="entry name" value="Mur_ligase_M"/>
    <property type="match status" value="1"/>
</dbReference>
<dbReference type="SUPFAM" id="SSF51984">
    <property type="entry name" value="MurCD N-terminal domain"/>
    <property type="match status" value="1"/>
</dbReference>
<dbReference type="SUPFAM" id="SSF53623">
    <property type="entry name" value="MurD-like peptide ligases, catalytic domain"/>
    <property type="match status" value="1"/>
</dbReference>
<dbReference type="SUPFAM" id="SSF53244">
    <property type="entry name" value="MurD-like peptide ligases, peptide-binding domain"/>
    <property type="match status" value="1"/>
</dbReference>
<proteinExistence type="inferred from homology"/>
<sequence length="471" mass="50999">MKMPKTIGLVHFIGIGGIGMSGIAEVLHNLGHRVQGSDQAESANVQRLREKGIRISIGHKAENLGDAEVIVVSTAIKKDNPELIAAREKFLPVVRRAEMLAELMRFRNAIAIGGTHGKTTTTSMVAALLDAGGLDPTVINGGIINAYGTNARMGAGEWMVVEADESDGTFLKLPADIAVVTNIDPEHLDHYGSFDAVRSAFRQFVENVPFYGFGVLCLDHPEVQSMVGKIEDRKVVTYGENPQADVRFHNIRMDGATSIFDIEIRRRRTGQVIEIKDLRLPMPGRHNVSNATAAVAVAQRLGIKPEDIARGIASFGGVKRRFTLTGEWNGARIFDDYGHHPVEIKAVLRAAREACQGRIVAVHQPHRYSRLSSLFEDFTSCFNDADTILLAPVYSAGEEAIDGVNSEALVNRIKAAGHRDARHISGQEALAPVVAKIAQPGDFVVLLGAGSITYWAAALPKQLAEISGNRA</sequence>
<gene>
    <name evidence="1" type="primary">murC</name>
    <name type="ordered locus">Smed_2081</name>
</gene>
<name>MURC_SINMW</name>
<evidence type="ECO:0000255" key="1">
    <source>
        <dbReference type="HAMAP-Rule" id="MF_00046"/>
    </source>
</evidence>
<comment type="function">
    <text evidence="1">Cell wall formation.</text>
</comment>
<comment type="catalytic activity">
    <reaction evidence="1">
        <text>UDP-N-acetyl-alpha-D-muramate + L-alanine + ATP = UDP-N-acetyl-alpha-D-muramoyl-L-alanine + ADP + phosphate + H(+)</text>
        <dbReference type="Rhea" id="RHEA:23372"/>
        <dbReference type="ChEBI" id="CHEBI:15378"/>
        <dbReference type="ChEBI" id="CHEBI:30616"/>
        <dbReference type="ChEBI" id="CHEBI:43474"/>
        <dbReference type="ChEBI" id="CHEBI:57972"/>
        <dbReference type="ChEBI" id="CHEBI:70757"/>
        <dbReference type="ChEBI" id="CHEBI:83898"/>
        <dbReference type="ChEBI" id="CHEBI:456216"/>
        <dbReference type="EC" id="6.3.2.8"/>
    </reaction>
</comment>
<comment type="pathway">
    <text evidence="1">Cell wall biogenesis; peptidoglycan biosynthesis.</text>
</comment>
<comment type="subcellular location">
    <subcellularLocation>
        <location evidence="1">Cytoplasm</location>
    </subcellularLocation>
</comment>
<comment type="similarity">
    <text evidence="1">Belongs to the MurCDEF family.</text>
</comment>
<organism>
    <name type="scientific">Sinorhizobium medicae (strain WSM419)</name>
    <name type="common">Ensifer medicae</name>
    <dbReference type="NCBI Taxonomy" id="366394"/>
    <lineage>
        <taxon>Bacteria</taxon>
        <taxon>Pseudomonadati</taxon>
        <taxon>Pseudomonadota</taxon>
        <taxon>Alphaproteobacteria</taxon>
        <taxon>Hyphomicrobiales</taxon>
        <taxon>Rhizobiaceae</taxon>
        <taxon>Sinorhizobium/Ensifer group</taxon>
        <taxon>Sinorhizobium</taxon>
    </lineage>
</organism>
<feature type="chain" id="PRO_1000004415" description="UDP-N-acetylmuramate--L-alanine ligase">
    <location>
        <begin position="1"/>
        <end position="471"/>
    </location>
</feature>
<feature type="binding site" evidence="1">
    <location>
        <begin position="114"/>
        <end position="120"/>
    </location>
    <ligand>
        <name>ATP</name>
        <dbReference type="ChEBI" id="CHEBI:30616"/>
    </ligand>
</feature>
<keyword id="KW-0067">ATP-binding</keyword>
<keyword id="KW-0131">Cell cycle</keyword>
<keyword id="KW-0132">Cell division</keyword>
<keyword id="KW-0133">Cell shape</keyword>
<keyword id="KW-0961">Cell wall biogenesis/degradation</keyword>
<keyword id="KW-0963">Cytoplasm</keyword>
<keyword id="KW-0436">Ligase</keyword>
<keyword id="KW-0547">Nucleotide-binding</keyword>
<keyword id="KW-0573">Peptidoglycan synthesis</keyword>
<reference key="1">
    <citation type="submission" date="2007-06" db="EMBL/GenBank/DDBJ databases">
        <title>Complete sequence of Sinorhizobium medicae WSM419 chromosome.</title>
        <authorList>
            <consortium name="US DOE Joint Genome Institute"/>
            <person name="Copeland A."/>
            <person name="Lucas S."/>
            <person name="Lapidus A."/>
            <person name="Barry K."/>
            <person name="Glavina del Rio T."/>
            <person name="Dalin E."/>
            <person name="Tice H."/>
            <person name="Pitluck S."/>
            <person name="Chain P."/>
            <person name="Malfatti S."/>
            <person name="Shin M."/>
            <person name="Vergez L."/>
            <person name="Schmutz J."/>
            <person name="Larimer F."/>
            <person name="Land M."/>
            <person name="Hauser L."/>
            <person name="Kyrpides N."/>
            <person name="Mikhailova N."/>
            <person name="Reeve W.G."/>
            <person name="Richardson P."/>
        </authorList>
    </citation>
    <scope>NUCLEOTIDE SEQUENCE [LARGE SCALE GENOMIC DNA]</scope>
    <source>
        <strain>WSM419</strain>
    </source>
</reference>
<accession>A6UB84</accession>
<protein>
    <recommendedName>
        <fullName evidence="1">UDP-N-acetylmuramate--L-alanine ligase</fullName>
        <ecNumber evidence="1">6.3.2.8</ecNumber>
    </recommendedName>
    <alternativeName>
        <fullName evidence="1">UDP-N-acetylmuramoyl-L-alanine synthetase</fullName>
    </alternativeName>
</protein>